<dbReference type="EMBL" id="AF167167">
    <property type="protein sequence ID" value="AAF03687.1"/>
    <property type="molecule type" value="mRNA"/>
</dbReference>
<dbReference type="EMBL" id="AF214958">
    <property type="protein sequence ID" value="AAG60386.1"/>
    <property type="molecule type" value="mRNA"/>
</dbReference>
<dbReference type="PIR" id="E59147">
    <property type="entry name" value="E59147"/>
</dbReference>
<dbReference type="PDB" id="1WCT">
    <property type="method" value="NMR"/>
    <property type="chains" value="A=51-63"/>
</dbReference>
<dbReference type="PDBsum" id="1WCT"/>
<dbReference type="SMR" id="P81755"/>
<dbReference type="TCDB" id="8.B.4.1.8">
    <property type="family name" value="the conotoxin t (conotoxin t) family"/>
</dbReference>
<dbReference type="iPTMnet" id="P81755"/>
<dbReference type="ConoServer" id="645">
    <property type="toxin name" value="TxVA precursor"/>
</dbReference>
<dbReference type="EvolutionaryTrace" id="P81755"/>
<dbReference type="GO" id="GO:0005576">
    <property type="term" value="C:extracellular region"/>
    <property type="evidence" value="ECO:0007669"/>
    <property type="project" value="UniProtKB-SubCell"/>
</dbReference>
<dbReference type="GO" id="GO:0044231">
    <property type="term" value="C:host cell presynaptic membrane"/>
    <property type="evidence" value="ECO:0007669"/>
    <property type="project" value="UniProtKB-KW"/>
</dbReference>
<dbReference type="GO" id="GO:0005246">
    <property type="term" value="F:calcium channel regulator activity"/>
    <property type="evidence" value="ECO:0007669"/>
    <property type="project" value="UniProtKB-KW"/>
</dbReference>
<dbReference type="GO" id="GO:0090729">
    <property type="term" value="F:toxin activity"/>
    <property type="evidence" value="ECO:0007669"/>
    <property type="project" value="UniProtKB-KW"/>
</dbReference>
<dbReference type="InterPro" id="IPR031565">
    <property type="entry name" value="T-conotoxin"/>
</dbReference>
<dbReference type="Pfam" id="PF16981">
    <property type="entry name" value="Chi-conotoxin"/>
    <property type="match status" value="1"/>
</dbReference>
<organism>
    <name type="scientific">Conus textile</name>
    <name type="common">Cloth-of-gold cone</name>
    <dbReference type="NCBI Taxonomy" id="6494"/>
    <lineage>
        <taxon>Eukaryota</taxon>
        <taxon>Metazoa</taxon>
        <taxon>Spiralia</taxon>
        <taxon>Lophotrochozoa</taxon>
        <taxon>Mollusca</taxon>
        <taxon>Gastropoda</taxon>
        <taxon>Caenogastropoda</taxon>
        <taxon>Neogastropoda</taxon>
        <taxon>Conoidea</taxon>
        <taxon>Conidae</taxon>
        <taxon>Conus</taxon>
        <taxon>Cylinder</taxon>
    </lineage>
</organism>
<name>CT5AS_CONTE</name>
<comment type="function">
    <text evidence="2">Epsilon-conotoxins act at presynaptic membranes, blocking the calcium channels or G protein-coupled receptors. Causes hyperactivity upon intracranial injection into mice. Causes dorsal fins drooping in fish.</text>
</comment>
<comment type="subcellular location">
    <subcellularLocation>
        <location evidence="3">Secreted</location>
    </subcellularLocation>
</comment>
<comment type="tissue specificity">
    <text evidence="9">Expressed by the venom duct.</text>
</comment>
<comment type="domain">
    <text evidence="8">The cysteine framework is V (CC-CC).</text>
</comment>
<comment type="PTM">
    <text evidence="2">O-glycan consists of the disaccharide Gal-GalNAc.</text>
</comment>
<comment type="mass spectrometry"/>
<comment type="mass spectrometry"/>
<comment type="similarity">
    <text evidence="8">Belongs to the conotoxin T superfamily.</text>
</comment>
<accession>P81755</accession>
<accession>Q9U6Z7</accession>
<reference key="1">
    <citation type="journal article" date="1999" name="J. Biol. Chem.">
        <title>The T-superfamily of conotoxins.</title>
        <authorList>
            <person name="Walker C.S."/>
            <person name="Steel D."/>
            <person name="Jacobsen R.B."/>
            <person name="Lirazan M.B."/>
            <person name="Cruz L.J."/>
            <person name="Hooper D."/>
            <person name="Shetty R."/>
            <person name="DelaCruz R.C."/>
            <person name="Nielsen J.S."/>
            <person name="Zhou L.M."/>
            <person name="Bandyopadhyay P."/>
            <person name="Craig A.G."/>
            <person name="Olivera B.M."/>
        </authorList>
    </citation>
    <scope>NUCLEOTIDE SEQUENCE [MRNA]</scope>
    <scope>PROTEIN SEQUENCE OF 51-63</scope>
    <scope>MASS SPECTROMETRY</scope>
    <scope>SUBCELLULAR LOCATION</scope>
    <scope>GAMMA-CARBOXYGLUTAMATION AT GLU-51 AND GLU-54</scope>
    <scope>BROMINATION AT TRP-57</scope>
    <scope>HYDROXYLATION AT PRO-63</scope>
    <scope>GLYCOSYLATION AT THR-60</scope>
    <source>
        <tissue>Venom</tissue>
        <tissue>Venom duct</tissue>
    </source>
</reference>
<reference key="2">
    <citation type="journal article" date="1999" name="J. Biol. Chem.">
        <authorList>
            <person name="Walker C.S."/>
            <person name="Steel D."/>
            <person name="Jacobsen R.B."/>
            <person name="Lirazan M.B."/>
            <person name="Cruz L.J."/>
            <person name="Hooper D."/>
            <person name="Shetty R."/>
            <person name="DelaCruz R.C."/>
            <person name="Nielsen J.S."/>
            <person name="Zhou L.M."/>
            <person name="Bandyopadhyay P."/>
            <person name="Craig A.G."/>
            <person name="Olivera B.M."/>
        </authorList>
    </citation>
    <scope>ERRATUM OF PUBMED:10521453</scope>
</reference>
<reference key="3">
    <citation type="journal article" date="2001" name="Mol. Biol. Evol.">
        <title>Mechanisms for evolving hypervariability: the case of conopeptides.</title>
        <authorList>
            <person name="Conticello S.G."/>
            <person name="Gilad Y."/>
            <person name="Avidan N."/>
            <person name="Ben-Asher E."/>
            <person name="Levy Z."/>
            <person name="Fainzilber M."/>
        </authorList>
    </citation>
    <scope>NUCLEOTIDE SEQUENCE [MRNA]</scope>
    <source>
        <tissue>Venom duct</tissue>
    </source>
</reference>
<reference key="4">
    <citation type="journal article" date="1999" name="Proc. Natl. Acad. Sci. U.S.A.">
        <title>A conotoxin from Conus textile with unusual posttranslational modifications reduces presynaptic Ca2+ influx.</title>
        <authorList>
            <person name="Rigby A.C."/>
            <person name="Lucas-Meunier E."/>
            <person name="Kalume D.E."/>
            <person name="Czerwiec E."/>
            <person name="Hambe B."/>
            <person name="Dahlqvist I."/>
            <person name="Fossier P."/>
            <person name="Baux G."/>
            <person name="Roepstorff P."/>
            <person name="Baleja J.D."/>
            <person name="Furie B.C."/>
            <person name="Furie B."/>
            <person name="Stenflo J.P."/>
        </authorList>
    </citation>
    <scope>PROTEIN SEQUENCE OF 51-63</scope>
    <scope>FUNCTION</scope>
    <scope>GLYCOSYLATION AT THR-60</scope>
    <scope>GAMMA-CARBOXYGLUTAMATION AT GLU-51 AND GLU-54</scope>
    <scope>BROMINATION AT TRP-57</scope>
    <scope>HYDROXYLATION AT PRO-63</scope>
    <scope>STRUCTURE BY NMR OF 51-63</scope>
    <scope>DISULFIDE BONDS</scope>
    <source>
        <tissue>Venom</tissue>
    </source>
</reference>
<reference key="5">
    <citation type="journal article" date="2000" name="J. Mass Spectrom.">
        <title>Structure determination of two conotoxins from Conus textile by a combination of matrix-assisted laser desorption/ionization time-of-flight and electrospray ionization mass spectrometry and biochemical methods.</title>
        <authorList>
            <person name="Kalume D.E."/>
            <person name="Stenflo J.P."/>
            <person name="Czerwiec E."/>
            <person name="Hambe B."/>
            <person name="Furie B.C."/>
            <person name="Furie B."/>
            <person name="Roepstorff P."/>
        </authorList>
    </citation>
    <scope>PROTEIN SEQUENCE OF 51-63</scope>
    <scope>MASS SPECTROMETRY</scope>
    <source>
        <tissue>Venom</tissue>
    </source>
</reference>
<sequence>MRCFPVFIILLLLIASAPCFDARTKTDDDVPLSSLRDNLKRTIRTRLNIRECCEDGWCCTAAPLTGR</sequence>
<feature type="signal peptide" evidence="1">
    <location>
        <begin position="1"/>
        <end position="19"/>
    </location>
</feature>
<feature type="propeptide" id="PRO_0000035016" evidence="2 3 4">
    <location>
        <begin position="20"/>
        <end position="50"/>
    </location>
</feature>
<feature type="peptide" id="PRO_0000035017" description="Epsilon-conotoxin TxVA" evidence="2 3 4">
    <location>
        <begin position="51"/>
        <end position="63"/>
    </location>
</feature>
<feature type="propeptide" id="PRO_0000035018" evidence="2 3 4">
    <location>
        <begin position="64"/>
        <end position="67"/>
    </location>
</feature>
<feature type="modified residue" description="4-carboxyglutamate" evidence="2 3">
    <location>
        <position position="51"/>
    </location>
</feature>
<feature type="modified residue" description="4-carboxyglutamate" evidence="2 3">
    <location>
        <position position="54"/>
    </location>
</feature>
<feature type="modified residue" description="6'-bromotryptophan" evidence="2 3">
    <location>
        <position position="57"/>
    </location>
</feature>
<feature type="modified residue" description="4-hydroxyproline" evidence="2 3">
    <location>
        <position position="63"/>
    </location>
</feature>
<feature type="glycosylation site" description="O-linked (GalNAc...) threonine" evidence="2 3">
    <location>
        <position position="60"/>
    </location>
</feature>
<feature type="disulfide bond" evidence="2">
    <location>
        <begin position="52"/>
        <end position="58"/>
    </location>
</feature>
<feature type="disulfide bond" evidence="2">
    <location>
        <begin position="53"/>
        <end position="59"/>
    </location>
</feature>
<feature type="turn" evidence="11">
    <location>
        <begin position="53"/>
        <end position="56"/>
    </location>
</feature>
<proteinExistence type="evidence at protein level"/>
<protein>
    <recommendedName>
        <fullName evidence="8">Epsilon-conotoxin TxVA</fullName>
    </recommendedName>
    <alternativeName>
        <fullName evidence="5 7">Epsilon-TxIX</fullName>
    </alternativeName>
    <alternativeName>
        <fullName evidence="10">Tx-012</fullName>
    </alternativeName>
    <alternativeName>
        <fullName evidence="6">Tx5.2</fullName>
    </alternativeName>
    <alternativeName>
        <fullName evidence="6">tx5a</fullName>
    </alternativeName>
</protein>
<keyword id="KW-0002">3D-structure</keyword>
<keyword id="KW-0102">Bromination</keyword>
<keyword id="KW-0108">Calcium channel impairing toxin</keyword>
<keyword id="KW-0903">Direct protein sequencing</keyword>
<keyword id="KW-1015">Disulfide bond</keyword>
<keyword id="KW-0301">Gamma-carboxyglutamic acid</keyword>
<keyword id="KW-0325">Glycoprotein</keyword>
<keyword id="KW-0379">Hydroxylation</keyword>
<keyword id="KW-0872">Ion channel impairing toxin</keyword>
<keyword id="KW-0528">Neurotoxin</keyword>
<keyword id="KW-0638">Presynaptic neurotoxin</keyword>
<keyword id="KW-0964">Secreted</keyword>
<keyword id="KW-0732">Signal</keyword>
<keyword id="KW-0800">Toxin</keyword>
<evidence type="ECO:0000255" key="1"/>
<evidence type="ECO:0000269" key="2">
    <source>
    </source>
</evidence>
<evidence type="ECO:0000269" key="3">
    <source>
    </source>
</evidence>
<evidence type="ECO:0000269" key="4">
    <source>
    </source>
</evidence>
<evidence type="ECO:0000303" key="5">
    <source>
    </source>
</evidence>
<evidence type="ECO:0000303" key="6">
    <source>
    </source>
</evidence>
<evidence type="ECO:0000303" key="7">
    <source>
    </source>
</evidence>
<evidence type="ECO:0000305" key="8"/>
<evidence type="ECO:0000305" key="9">
    <source>
    </source>
</evidence>
<evidence type="ECO:0000312" key="10">
    <source>
        <dbReference type="EMBL" id="AAG60386.1"/>
    </source>
</evidence>
<evidence type="ECO:0007829" key="11">
    <source>
        <dbReference type="PDB" id="1WCT"/>
    </source>
</evidence>